<sequence length="257" mass="28070">MPASMFSIDNILAARPRCKDSVLPVAPSAAAPVVFPALHGDSLYGASGGASSDYGAFYPRPVAPGGAGLPAAVSGSRLGYNNYFYGQLHVQAAPVGPACCGAVPPLGAQQCSCVPAPSGYEGPGSVLVSPVPHQMLPYMNVGTLSRTELQLLNQLHCRRKRRHRTIFTDEQLEALENLFQETKYPDVGTREQLARKVHLREEKVEVWFKNRRAKWRRQKRSSSEESENAEKWNKTSSSKASPEKREEEGKSDLDSDS</sequence>
<feature type="chain" id="PRO_0000285445" description="Homeobox protein goosecoid">
    <location>
        <begin position="1"/>
        <end position="257"/>
    </location>
</feature>
<feature type="DNA-binding region" description="Homeobox" evidence="2">
    <location>
        <begin position="160"/>
        <end position="219"/>
    </location>
</feature>
<feature type="region of interest" description="Disordered" evidence="3">
    <location>
        <begin position="213"/>
        <end position="257"/>
    </location>
</feature>
<feature type="compositionally biased region" description="Basic and acidic residues" evidence="3">
    <location>
        <begin position="241"/>
        <end position="257"/>
    </location>
</feature>
<organism>
    <name type="scientific">Pongo pygmaeus</name>
    <name type="common">Bornean orangutan</name>
    <dbReference type="NCBI Taxonomy" id="9600"/>
    <lineage>
        <taxon>Eukaryota</taxon>
        <taxon>Metazoa</taxon>
        <taxon>Chordata</taxon>
        <taxon>Craniata</taxon>
        <taxon>Vertebrata</taxon>
        <taxon>Euteleostomi</taxon>
        <taxon>Mammalia</taxon>
        <taxon>Eutheria</taxon>
        <taxon>Euarchontoglires</taxon>
        <taxon>Primates</taxon>
        <taxon>Haplorrhini</taxon>
        <taxon>Catarrhini</taxon>
        <taxon>Hominidae</taxon>
        <taxon>Pongo</taxon>
    </lineage>
</organism>
<comment type="function">
    <text evidence="1">Regulates chordin (CHRD). May play a role in spatial programing within discrete embryonic fields or lineage compartments during organogenesis. In concert with NKX3-2, plays a role in defining the structural components of the middle ear; required for the development of the entire tympanic ring (By similarity). Probably involved in the regulatory networks that define neural crest cell fate specification and determine mesoderm cell lineages in mammals (By similarity).</text>
</comment>
<comment type="subcellular location">
    <subcellularLocation>
        <location evidence="2">Nucleus</location>
    </subcellularLocation>
</comment>
<comment type="similarity">
    <text evidence="4">Belongs to the paired homeobox family. Bicoid subfamily.</text>
</comment>
<gene>
    <name type="primary">GSC</name>
</gene>
<reference key="1">
    <citation type="submission" date="2006-08" db="EMBL/GenBank/DDBJ databases">
        <title>Positive selection in transcription factor genes on the human lineage.</title>
        <authorList>
            <person name="Nickel G.C."/>
            <person name="Tefft D.L."/>
            <person name="Trevarthen K."/>
            <person name="Funt J."/>
            <person name="Adams M.D."/>
        </authorList>
    </citation>
    <scope>NUCLEOTIDE SEQUENCE [GENOMIC DNA]</scope>
</reference>
<dbReference type="EMBL" id="DQ977514">
    <property type="protein sequence ID" value="ABM89322.1"/>
    <property type="molecule type" value="Genomic_DNA"/>
</dbReference>
<dbReference type="RefSeq" id="XP_054303477.1">
    <property type="nucleotide sequence ID" value="XM_054447502.2"/>
</dbReference>
<dbReference type="BMRB" id="A2T7P4"/>
<dbReference type="SMR" id="A2T7P4"/>
<dbReference type="GeneID" id="129012131"/>
<dbReference type="GO" id="GO:0005634">
    <property type="term" value="C:nucleus"/>
    <property type="evidence" value="ECO:0007669"/>
    <property type="project" value="UniProtKB-SubCell"/>
</dbReference>
<dbReference type="GO" id="GO:0000981">
    <property type="term" value="F:DNA-binding transcription factor activity, RNA polymerase II-specific"/>
    <property type="evidence" value="ECO:0007669"/>
    <property type="project" value="InterPro"/>
</dbReference>
<dbReference type="GO" id="GO:0000978">
    <property type="term" value="F:RNA polymerase II cis-regulatory region sequence-specific DNA binding"/>
    <property type="evidence" value="ECO:0007669"/>
    <property type="project" value="TreeGrafter"/>
</dbReference>
<dbReference type="GO" id="GO:0042474">
    <property type="term" value="P:middle ear morphogenesis"/>
    <property type="evidence" value="ECO:0000250"/>
    <property type="project" value="UniProtKB"/>
</dbReference>
<dbReference type="GO" id="GO:0014036">
    <property type="term" value="P:neural crest cell fate specification"/>
    <property type="evidence" value="ECO:0000250"/>
    <property type="project" value="UniProtKB"/>
</dbReference>
<dbReference type="CDD" id="cd00086">
    <property type="entry name" value="homeodomain"/>
    <property type="match status" value="1"/>
</dbReference>
<dbReference type="FunFam" id="1.10.10.60:FF:000210">
    <property type="entry name" value="homeobox protein goosecoid"/>
    <property type="match status" value="1"/>
</dbReference>
<dbReference type="Gene3D" id="1.10.10.60">
    <property type="entry name" value="Homeodomain-like"/>
    <property type="match status" value="1"/>
</dbReference>
<dbReference type="InterPro" id="IPR051440">
    <property type="entry name" value="Goosecoid-like_HB"/>
</dbReference>
<dbReference type="InterPro" id="IPR001356">
    <property type="entry name" value="HD"/>
</dbReference>
<dbReference type="InterPro" id="IPR017970">
    <property type="entry name" value="Homeobox_CS"/>
</dbReference>
<dbReference type="InterPro" id="IPR009057">
    <property type="entry name" value="Homeodomain-like_sf"/>
</dbReference>
<dbReference type="PANTHER" id="PTHR46643:SF2">
    <property type="entry name" value="HOMEOBOX PROTEIN GOOSECOID"/>
    <property type="match status" value="1"/>
</dbReference>
<dbReference type="PANTHER" id="PTHR46643">
    <property type="entry name" value="HOMEOBOX PROTEIN GOOSECOID-RELATED"/>
    <property type="match status" value="1"/>
</dbReference>
<dbReference type="Pfam" id="PF00046">
    <property type="entry name" value="Homeodomain"/>
    <property type="match status" value="1"/>
</dbReference>
<dbReference type="SMART" id="SM00389">
    <property type="entry name" value="HOX"/>
    <property type="match status" value="1"/>
</dbReference>
<dbReference type="SUPFAM" id="SSF46689">
    <property type="entry name" value="Homeodomain-like"/>
    <property type="match status" value="1"/>
</dbReference>
<dbReference type="PROSITE" id="PS00027">
    <property type="entry name" value="HOMEOBOX_1"/>
    <property type="match status" value="1"/>
</dbReference>
<dbReference type="PROSITE" id="PS50071">
    <property type="entry name" value="HOMEOBOX_2"/>
    <property type="match status" value="1"/>
</dbReference>
<name>GSC_PONPY</name>
<evidence type="ECO:0000250" key="1"/>
<evidence type="ECO:0000255" key="2">
    <source>
        <dbReference type="PROSITE-ProRule" id="PRU00108"/>
    </source>
</evidence>
<evidence type="ECO:0000256" key="3">
    <source>
        <dbReference type="SAM" id="MobiDB-lite"/>
    </source>
</evidence>
<evidence type="ECO:0000305" key="4"/>
<accession>A2T7P4</accession>
<protein>
    <recommendedName>
        <fullName>Homeobox protein goosecoid</fullName>
    </recommendedName>
</protein>
<proteinExistence type="inferred from homology"/>
<keyword id="KW-0217">Developmental protein</keyword>
<keyword id="KW-0238">DNA-binding</keyword>
<keyword id="KW-0371">Homeobox</keyword>
<keyword id="KW-0539">Nucleus</keyword>